<proteinExistence type="inferred from homology"/>
<accession>Q7Q107</accession>
<gene>
    <name type="primary">MED6</name>
    <name type="ORF">AGAP010034</name>
</gene>
<dbReference type="EMBL" id="AAAB01008980">
    <property type="protein sequence ID" value="EAA14057.3"/>
    <property type="molecule type" value="Genomic_DNA"/>
</dbReference>
<dbReference type="RefSeq" id="XP_319180.3">
    <property type="nucleotide sequence ID" value="XM_319180.4"/>
</dbReference>
<dbReference type="SMR" id="Q7Q107"/>
<dbReference type="FunCoup" id="Q7Q107">
    <property type="interactions" value="2895"/>
</dbReference>
<dbReference type="STRING" id="7165.Q7Q107"/>
<dbReference type="PaxDb" id="7165-AGAP010034-PA"/>
<dbReference type="EnsemblMetazoa" id="AGAP010034-RA">
    <property type="protein sequence ID" value="AGAP010034-PA"/>
    <property type="gene ID" value="AGAP010034"/>
</dbReference>
<dbReference type="GeneID" id="1279460"/>
<dbReference type="KEGG" id="aga:1279460"/>
<dbReference type="CTD" id="10001"/>
<dbReference type="VEuPathDB" id="VectorBase:AGAMI1_005915"/>
<dbReference type="VEuPathDB" id="VectorBase:AGAP010034"/>
<dbReference type="eggNOG" id="KOG3169">
    <property type="taxonomic scope" value="Eukaryota"/>
</dbReference>
<dbReference type="HOGENOM" id="CLU_077754_1_1_1"/>
<dbReference type="InParanoid" id="Q7Q107"/>
<dbReference type="OMA" id="KKDMKPP"/>
<dbReference type="PhylomeDB" id="Q7Q107"/>
<dbReference type="Proteomes" id="UP000007062">
    <property type="component" value="Chromosome 3R"/>
</dbReference>
<dbReference type="GO" id="GO:0070847">
    <property type="term" value="C:core mediator complex"/>
    <property type="evidence" value="ECO:0000318"/>
    <property type="project" value="GO_Central"/>
</dbReference>
<dbReference type="GO" id="GO:0016592">
    <property type="term" value="C:mediator complex"/>
    <property type="evidence" value="ECO:0000318"/>
    <property type="project" value="GO_Central"/>
</dbReference>
<dbReference type="GO" id="GO:0003713">
    <property type="term" value="F:transcription coactivator activity"/>
    <property type="evidence" value="ECO:0000318"/>
    <property type="project" value="GO_Central"/>
</dbReference>
<dbReference type="GO" id="GO:0006357">
    <property type="term" value="P:regulation of transcription by RNA polymerase II"/>
    <property type="evidence" value="ECO:0000318"/>
    <property type="project" value="GO_Central"/>
</dbReference>
<dbReference type="FunFam" id="3.10.450.580:FF:000001">
    <property type="entry name" value="Mediator of RNA polymerase II transcription subunit 6"/>
    <property type="match status" value="1"/>
</dbReference>
<dbReference type="Gene3D" id="3.10.450.580">
    <property type="entry name" value="Mediator complex, subunit Med6"/>
    <property type="match status" value="1"/>
</dbReference>
<dbReference type="InterPro" id="IPR007018">
    <property type="entry name" value="Mediator_Med6"/>
</dbReference>
<dbReference type="InterPro" id="IPR016820">
    <property type="entry name" value="Mediator_Med6_met/pln"/>
</dbReference>
<dbReference type="InterPro" id="IPR038566">
    <property type="entry name" value="Mediator_Med6_sf"/>
</dbReference>
<dbReference type="PANTHER" id="PTHR13104">
    <property type="entry name" value="MED-6-RELATED"/>
    <property type="match status" value="1"/>
</dbReference>
<dbReference type="Pfam" id="PF04934">
    <property type="entry name" value="Med6"/>
    <property type="match status" value="1"/>
</dbReference>
<dbReference type="PIRSF" id="PIRSF023869">
    <property type="entry name" value="Mediator_MED6_meta/pln"/>
    <property type="match status" value="1"/>
</dbReference>
<feature type="chain" id="PRO_0000303044" description="Mediator of RNA polymerase II transcription subunit 6">
    <location>
        <begin position="1"/>
        <end position="267"/>
    </location>
</feature>
<feature type="region of interest" description="Disordered" evidence="2">
    <location>
        <begin position="202"/>
        <end position="267"/>
    </location>
</feature>
<feature type="compositionally biased region" description="Polar residues" evidence="2">
    <location>
        <begin position="205"/>
        <end position="218"/>
    </location>
</feature>
<name>MED6_ANOGA</name>
<organism>
    <name type="scientific">Anopheles gambiae</name>
    <name type="common">African malaria mosquito</name>
    <dbReference type="NCBI Taxonomy" id="7165"/>
    <lineage>
        <taxon>Eukaryota</taxon>
        <taxon>Metazoa</taxon>
        <taxon>Ecdysozoa</taxon>
        <taxon>Arthropoda</taxon>
        <taxon>Hexapoda</taxon>
        <taxon>Insecta</taxon>
        <taxon>Pterygota</taxon>
        <taxon>Neoptera</taxon>
        <taxon>Endopterygota</taxon>
        <taxon>Diptera</taxon>
        <taxon>Nematocera</taxon>
        <taxon>Culicoidea</taxon>
        <taxon>Culicidae</taxon>
        <taxon>Anophelinae</taxon>
        <taxon>Anopheles</taxon>
    </lineage>
</organism>
<sequence>MNPGRLGLAPLLQENPLWISWHDSNWIPVLNPGNVMDYFSEKSNPFYDRTCNNEIVRMQRQSLELLNNMTGVEYIPLHVQDPILYVIRKQHRHSPTEATPMADYYIIAGTVYQAPDLASVFNSRILSTVHHLQTAFDEASSYSRYHPSKGYSWDFSSNKAIAEKTKTQTKKEAPVKEEPSSIFQRQRVDMLLGDLLRKFPLPLPQMTNNPTGGNPSDTANASNNHGGAAGDSDHVGADATLIKQEPTEGGVGRAGNNDVPPEKKMKL</sequence>
<comment type="function">
    <text evidence="1">Component of the Mediator complex, a coactivator involved in the regulated transcription of nearly all RNA polymerase II-dependent genes. Mediator functions as a bridge to convey information from gene-specific regulatory proteins to the basal RNA polymerase II transcription machinery. Mediator is recruited to promoters by direct interactions with regulatory proteins and serves as a scaffold for the assembly of a functional preinitiation complex with RNA polymerase II and the general transcription factors (By similarity).</text>
</comment>
<comment type="subunit">
    <text evidence="1">Component of the Mediator complex.</text>
</comment>
<comment type="subcellular location">
    <subcellularLocation>
        <location evidence="1">Nucleus</location>
    </subcellularLocation>
</comment>
<comment type="similarity">
    <text evidence="3">Belongs to the Mediator complex subunit 6 family.</text>
</comment>
<reference key="1">
    <citation type="journal article" date="2002" name="Science">
        <title>The genome sequence of the malaria mosquito Anopheles gambiae.</title>
        <authorList>
            <person name="Holt R.A."/>
            <person name="Subramanian G.M."/>
            <person name="Halpern A."/>
            <person name="Sutton G.G."/>
            <person name="Charlab R."/>
            <person name="Nusskern D.R."/>
            <person name="Wincker P."/>
            <person name="Clark A.G."/>
            <person name="Ribeiro J.M.C."/>
            <person name="Wides R."/>
            <person name="Salzberg S.L."/>
            <person name="Loftus B.J."/>
            <person name="Yandell M.D."/>
            <person name="Majoros W.H."/>
            <person name="Rusch D.B."/>
            <person name="Lai Z."/>
            <person name="Kraft C.L."/>
            <person name="Abril J.F."/>
            <person name="Anthouard V."/>
            <person name="Arensburger P."/>
            <person name="Atkinson P.W."/>
            <person name="Baden H."/>
            <person name="de Berardinis V."/>
            <person name="Baldwin D."/>
            <person name="Benes V."/>
            <person name="Biedler J."/>
            <person name="Blass C."/>
            <person name="Bolanos R."/>
            <person name="Boscus D."/>
            <person name="Barnstead M."/>
            <person name="Cai S."/>
            <person name="Center A."/>
            <person name="Chaturverdi K."/>
            <person name="Christophides G.K."/>
            <person name="Chrystal M.A.M."/>
            <person name="Clamp M."/>
            <person name="Cravchik A."/>
            <person name="Curwen V."/>
            <person name="Dana A."/>
            <person name="Delcher A."/>
            <person name="Dew I."/>
            <person name="Evans C.A."/>
            <person name="Flanigan M."/>
            <person name="Grundschober-Freimoser A."/>
            <person name="Friedli L."/>
            <person name="Gu Z."/>
            <person name="Guan P."/>
            <person name="Guigo R."/>
            <person name="Hillenmeyer M.E."/>
            <person name="Hladun S.L."/>
            <person name="Hogan J.R."/>
            <person name="Hong Y.S."/>
            <person name="Hoover J."/>
            <person name="Jaillon O."/>
            <person name="Ke Z."/>
            <person name="Kodira C.D."/>
            <person name="Kokoza E."/>
            <person name="Koutsos A."/>
            <person name="Letunic I."/>
            <person name="Levitsky A.A."/>
            <person name="Liang Y."/>
            <person name="Lin J.-J."/>
            <person name="Lobo N.F."/>
            <person name="Lopez J.R."/>
            <person name="Malek J.A."/>
            <person name="McIntosh T.C."/>
            <person name="Meister S."/>
            <person name="Miller J.R."/>
            <person name="Mobarry C."/>
            <person name="Mongin E."/>
            <person name="Murphy S.D."/>
            <person name="O'Brochta D.A."/>
            <person name="Pfannkoch C."/>
            <person name="Qi R."/>
            <person name="Regier M.A."/>
            <person name="Remington K."/>
            <person name="Shao H."/>
            <person name="Sharakhova M.V."/>
            <person name="Sitter C.D."/>
            <person name="Shetty J."/>
            <person name="Smith T.J."/>
            <person name="Strong R."/>
            <person name="Sun J."/>
            <person name="Thomasova D."/>
            <person name="Ton L.Q."/>
            <person name="Topalis P."/>
            <person name="Tu Z.J."/>
            <person name="Unger M.F."/>
            <person name="Walenz B."/>
            <person name="Wang A.H."/>
            <person name="Wang J."/>
            <person name="Wang M."/>
            <person name="Wang X."/>
            <person name="Woodford K.J."/>
            <person name="Wortman J.R."/>
            <person name="Wu M."/>
            <person name="Yao A."/>
            <person name="Zdobnov E.M."/>
            <person name="Zhang H."/>
            <person name="Zhao Q."/>
            <person name="Zhao S."/>
            <person name="Zhu S.C."/>
            <person name="Zhimulev I."/>
            <person name="Coluzzi M."/>
            <person name="della Torre A."/>
            <person name="Roth C.W."/>
            <person name="Louis C."/>
            <person name="Kalush F."/>
            <person name="Mural R.J."/>
            <person name="Myers E.W."/>
            <person name="Adams M.D."/>
            <person name="Smith H.O."/>
            <person name="Broder S."/>
            <person name="Gardner M.J."/>
            <person name="Fraser C.M."/>
            <person name="Birney E."/>
            <person name="Bork P."/>
            <person name="Brey P.T."/>
            <person name="Venter J.C."/>
            <person name="Weissenbach J."/>
            <person name="Kafatos F.C."/>
            <person name="Collins F.H."/>
            <person name="Hoffman S.L."/>
        </authorList>
    </citation>
    <scope>NUCLEOTIDE SEQUENCE [LARGE SCALE GENOMIC DNA]</scope>
    <source>
        <strain>PEST</strain>
    </source>
</reference>
<protein>
    <recommendedName>
        <fullName>Mediator of RNA polymerase II transcription subunit 6</fullName>
    </recommendedName>
    <alternativeName>
        <fullName>Mediator complex subunit 6</fullName>
    </alternativeName>
</protein>
<evidence type="ECO:0000250" key="1"/>
<evidence type="ECO:0000256" key="2">
    <source>
        <dbReference type="SAM" id="MobiDB-lite"/>
    </source>
</evidence>
<evidence type="ECO:0000305" key="3"/>
<keyword id="KW-0010">Activator</keyword>
<keyword id="KW-0539">Nucleus</keyword>
<keyword id="KW-1185">Reference proteome</keyword>
<keyword id="KW-0804">Transcription</keyword>
<keyword id="KW-0805">Transcription regulation</keyword>